<organism>
    <name type="scientific">Buchnera aphidicola subsp. Schizaphis graminum (strain Sg)</name>
    <dbReference type="NCBI Taxonomy" id="198804"/>
    <lineage>
        <taxon>Bacteria</taxon>
        <taxon>Pseudomonadati</taxon>
        <taxon>Pseudomonadota</taxon>
        <taxon>Gammaproteobacteria</taxon>
        <taxon>Enterobacterales</taxon>
        <taxon>Erwiniaceae</taxon>
        <taxon>Buchnera</taxon>
    </lineage>
</organism>
<dbReference type="EC" id="2.7.7.7"/>
<dbReference type="EMBL" id="AE013218">
    <property type="protein sequence ID" value="AAM67896.1"/>
    <property type="molecule type" value="Genomic_DNA"/>
</dbReference>
<dbReference type="SMR" id="Q8K9J2"/>
<dbReference type="STRING" id="198804.BUsg_342"/>
<dbReference type="KEGG" id="bas:BUsg_342"/>
<dbReference type="eggNOG" id="COG0470">
    <property type="taxonomic scope" value="Bacteria"/>
</dbReference>
<dbReference type="HOGENOM" id="CLU_006229_4_3_6"/>
<dbReference type="Proteomes" id="UP000000416">
    <property type="component" value="Chromosome"/>
</dbReference>
<dbReference type="GO" id="GO:0009360">
    <property type="term" value="C:DNA polymerase III complex"/>
    <property type="evidence" value="ECO:0007669"/>
    <property type="project" value="InterPro"/>
</dbReference>
<dbReference type="GO" id="GO:0003677">
    <property type="term" value="F:DNA binding"/>
    <property type="evidence" value="ECO:0007669"/>
    <property type="project" value="InterPro"/>
</dbReference>
<dbReference type="GO" id="GO:0003887">
    <property type="term" value="F:DNA-directed DNA polymerase activity"/>
    <property type="evidence" value="ECO:0007669"/>
    <property type="project" value="UniProtKB-KW"/>
</dbReference>
<dbReference type="GO" id="GO:0006261">
    <property type="term" value="P:DNA-templated DNA replication"/>
    <property type="evidence" value="ECO:0007669"/>
    <property type="project" value="TreeGrafter"/>
</dbReference>
<dbReference type="Gene3D" id="1.20.272.10">
    <property type="match status" value="1"/>
</dbReference>
<dbReference type="Gene3D" id="3.40.50.300">
    <property type="entry name" value="P-loop containing nucleotide triphosphate hydrolases"/>
    <property type="match status" value="1"/>
</dbReference>
<dbReference type="InterPro" id="IPR008921">
    <property type="entry name" value="DNA_pol3_clamp-load_cplx_C"/>
</dbReference>
<dbReference type="InterPro" id="IPR015199">
    <property type="entry name" value="DNA_pol_III_delta_C"/>
</dbReference>
<dbReference type="InterPro" id="IPR050238">
    <property type="entry name" value="DNA_Rep/Repair_Clamp_Loader"/>
</dbReference>
<dbReference type="InterPro" id="IPR027417">
    <property type="entry name" value="P-loop_NTPase"/>
</dbReference>
<dbReference type="PANTHER" id="PTHR11669:SF8">
    <property type="entry name" value="DNA POLYMERASE III SUBUNIT DELTA"/>
    <property type="match status" value="1"/>
</dbReference>
<dbReference type="PANTHER" id="PTHR11669">
    <property type="entry name" value="REPLICATION FACTOR C / DNA POLYMERASE III GAMMA-TAU SUBUNIT"/>
    <property type="match status" value="1"/>
</dbReference>
<dbReference type="Pfam" id="PF13177">
    <property type="entry name" value="DNA_pol3_delta2"/>
    <property type="match status" value="1"/>
</dbReference>
<dbReference type="Pfam" id="PF09115">
    <property type="entry name" value="DNApol3-delta_C"/>
    <property type="match status" value="1"/>
</dbReference>
<dbReference type="SUPFAM" id="SSF52540">
    <property type="entry name" value="P-loop containing nucleoside triphosphate hydrolases"/>
    <property type="match status" value="1"/>
</dbReference>
<dbReference type="SUPFAM" id="SSF48019">
    <property type="entry name" value="post-AAA+ oligomerization domain-like"/>
    <property type="match status" value="1"/>
</dbReference>
<comment type="function">
    <text evidence="1">DNA polymerase III is a complex, multichain enzyme responsible for most of the replicative synthesis in bacteria. This DNA polymerase also exhibits 3' to 5' exonuclease activity (By similarity).</text>
</comment>
<comment type="catalytic activity">
    <reaction>
        <text>DNA(n) + a 2'-deoxyribonucleoside 5'-triphosphate = DNA(n+1) + diphosphate</text>
        <dbReference type="Rhea" id="RHEA:22508"/>
        <dbReference type="Rhea" id="RHEA-COMP:17339"/>
        <dbReference type="Rhea" id="RHEA-COMP:17340"/>
        <dbReference type="ChEBI" id="CHEBI:33019"/>
        <dbReference type="ChEBI" id="CHEBI:61560"/>
        <dbReference type="ChEBI" id="CHEBI:173112"/>
        <dbReference type="EC" id="2.7.7.7"/>
    </reaction>
</comment>
<comment type="subunit">
    <text evidence="1">DNA polymerase III contains a core (composed of alpha, epsilon and theta chains) that associates with a tau subunit. This core dimerizes to form the POLIII' complex. PolIII' associates with the gamma complex (composed of gamma, delta, delta', psi and chi chains) and with the beta chain to form the complete DNA polymerase III complex (By similarity).</text>
</comment>
<feature type="chain" id="PRO_0000105511" description="DNA polymerase III subunit delta'">
    <location>
        <begin position="1"/>
        <end position="328"/>
    </location>
</feature>
<reference key="1">
    <citation type="journal article" date="2002" name="Science">
        <title>50 million years of genomic stasis in endosymbiotic bacteria.</title>
        <authorList>
            <person name="Tamas I."/>
            <person name="Klasson L."/>
            <person name="Canbaeck B."/>
            <person name="Naeslund A.K."/>
            <person name="Eriksson A.-S."/>
            <person name="Wernegreen J.J."/>
            <person name="Sandstroem J.P."/>
            <person name="Moran N.A."/>
            <person name="Andersson S.G.E."/>
        </authorList>
    </citation>
    <scope>NUCLEOTIDE SEQUENCE [LARGE SCALE GENOMIC DNA]</scope>
    <source>
        <strain>Sg</strain>
    </source>
</reference>
<gene>
    <name type="primary">holB</name>
    <name type="ordered locus">BUsg_342</name>
</gene>
<keyword id="KW-0235">DNA replication</keyword>
<keyword id="KW-0239">DNA-directed DNA polymerase</keyword>
<keyword id="KW-0548">Nucleotidyltransferase</keyword>
<keyword id="KW-0808">Transferase</keyword>
<sequence length="328" mass="38927">MKWYPWLIKPYKKIIRLHERKKAHHAILIKTQKGMGVFKLVWFISKWLLCLKPKGTNFCDNCHGCKLMSANNHPDWHTIINEKNDVFDVDSIRVINEKIFKRAQQGNNKIIFLPNVHKLTESAVNALLKILEEPPEKNWFFLIDYNYLKLHSTLKSRCFLYRLPLPLEKESLNWLKNNNKKDNISNLTSLRINQDSPISAKNFIESDLWDERKNLYKSLSHSIKDKNLLKILPVLCKKNTIMKIDWICLLLFDAVKTNFNERKKLINCDQIKLINFFSKKYNNILLNKSIRKWTKCRYILSSVSSINSELLLLEQLLLWEKILCFITP</sequence>
<evidence type="ECO:0000250" key="1"/>
<proteinExistence type="inferred from homology"/>
<protein>
    <recommendedName>
        <fullName>DNA polymerase III subunit delta'</fullName>
        <ecNumber>2.7.7.7</ecNumber>
    </recommendedName>
</protein>
<name>HOLB_BUCAP</name>
<accession>Q8K9J2</accession>